<feature type="chain" id="PRO_0000204661" description="Sucrose synthase">
    <location>
        <begin position="1"/>
        <end position="805"/>
    </location>
</feature>
<feature type="region of interest" description="GT-B glycosyltransferase" evidence="1">
    <location>
        <begin position="275"/>
        <end position="752"/>
    </location>
</feature>
<feature type="sequence conflict" description="In Ref. 2; AAA97571." evidence="2" ref="2">
    <original>E</original>
    <variation>D</variation>
    <location>
        <position position="221"/>
    </location>
</feature>
<feature type="sequence conflict" description="In Ref. 2; AAA97571." evidence="2" ref="2">
    <original>KD</original>
    <variation>RE</variation>
    <location>
        <begin position="731"/>
        <end position="732"/>
    </location>
</feature>
<feature type="sequence conflict" description="In Ref. 2; AAA97571." evidence="2" ref="2">
    <original>M</original>
    <variation>T</variation>
    <location>
        <position position="741"/>
    </location>
</feature>
<feature type="sequence conflict" description="In Ref. 2; AAA97571." evidence="2" ref="2">
    <original>E</original>
    <variation>Q</variation>
    <location>
        <position position="748"/>
    </location>
</feature>
<feature type="sequence conflict" description="In Ref. 2; AAA97571." evidence="2" ref="2">
    <original>S</original>
    <variation>R</variation>
    <location>
        <position position="759"/>
    </location>
</feature>
<name>SUS1_SOLTU</name>
<organism>
    <name type="scientific">Solanum tuberosum</name>
    <name type="common">Potato</name>
    <dbReference type="NCBI Taxonomy" id="4113"/>
    <lineage>
        <taxon>Eukaryota</taxon>
        <taxon>Viridiplantae</taxon>
        <taxon>Streptophyta</taxon>
        <taxon>Embryophyta</taxon>
        <taxon>Tracheophyta</taxon>
        <taxon>Spermatophyta</taxon>
        <taxon>Magnoliopsida</taxon>
        <taxon>eudicotyledons</taxon>
        <taxon>Gunneridae</taxon>
        <taxon>Pentapetalae</taxon>
        <taxon>asterids</taxon>
        <taxon>lamiids</taxon>
        <taxon>Solanales</taxon>
        <taxon>Solanaceae</taxon>
        <taxon>Solanoideae</taxon>
        <taxon>Solaneae</taxon>
        <taxon>Solanum</taxon>
    </lineage>
</organism>
<keyword id="KW-0328">Glycosyltransferase</keyword>
<keyword id="KW-1185">Reference proteome</keyword>
<keyword id="KW-0808">Transferase</keyword>
<sequence length="805" mass="92416">MAERVLTRVHSLRERVDATLAAHRNEILLFLSRIESHGKGILKPHELLAEFDAIRQDDKNKLNEHAFEELLKSTQEAIVLPPWVALAIRLRPGVWEYIRVNVNALVVEELSVPEYLQFKEELVDGASNGNFVLELDFEPFTASFPKPTLTKSIGNGVEFLNRHLSAKMFHDKESMTPLLEFLRAHHYKGKTMMLNDRIQNSNTLQNVLRKAEEYLIMLPPETPYFEFEHKFQEIGLEKGWGDTAERVLEMVCMLLDLLEAPDSCTLEKFLGRIPMVFNVVILSPHGYFAQENVLGYPDTGGQVVYILDQVPALEREMLKRIKEQGLDIIPRILIVTRLLPDAVGTTCGQRIEKVYGAEHSHILRVPFRTEKGIVRKWISRFEVWPYMETFIEDVAKEISAELQAKPDLIIGNYSEGNLAASLLAHKLGVTQCTIAHALEKTKYPDSDIYWKKFDEKYHFSSQFTADLIAMNHTDFIITSTFQEIAGSKDTVGQYESHMAFTMPGLYRVVHGINVFDPKFNIVSPGADINLYFSYSETEKRLTAFHPEIDELLYSDVENDEHLCVLKDRTKPILFTMARLDRVKNLTGLVEWYAKNPRLRGLVNLVVVGGDRRKESKDLEEQAEMKKMYELIETHNLNGQFRWISSQMNRVRNGELYRYIADTKGAFVQPAFYEAFGLTVVEAMTCGLPTFATNHGGPAEIIVHGKSGFHIDPYHGEQAADLLADFFEKCKKDPSHWETISMGGLKRIEEKYTWQIYSESLLTLAAVYGFWKHVSKLDRLEIRRYLEMFYALKYRKMAEAVPLAAE</sequence>
<accession>P10691</accession>
<comment type="function">
    <text>Sucrose-cleaving enzyme that provides UDP-glucose and fructose for various metabolic pathways.</text>
</comment>
<comment type="catalytic activity">
    <reaction>
        <text>an NDP-alpha-D-glucose + D-fructose = a ribonucleoside 5'-diphosphate + sucrose + H(+)</text>
        <dbReference type="Rhea" id="RHEA:16241"/>
        <dbReference type="ChEBI" id="CHEBI:15378"/>
        <dbReference type="ChEBI" id="CHEBI:17992"/>
        <dbReference type="ChEBI" id="CHEBI:37721"/>
        <dbReference type="ChEBI" id="CHEBI:57930"/>
        <dbReference type="ChEBI" id="CHEBI:76533"/>
        <dbReference type="EC" id="2.4.1.13"/>
    </reaction>
</comment>
<comment type="tissue specificity">
    <text>Expression is at least 10-fold higher in tubers compared to photosynthetically active tissues.</text>
</comment>
<comment type="similarity">
    <text evidence="2">Belongs to the glycosyltransferase 1 family. Plant sucrose synthase subfamily.</text>
</comment>
<protein>
    <recommendedName>
        <fullName>Sucrose synthase</fullName>
        <ecNumber>2.4.1.13</ecNumber>
    </recommendedName>
    <alternativeName>
        <fullName>SS16</fullName>
    </alternativeName>
    <alternativeName>
        <fullName>Sucrose-UDP glucosyltransferase</fullName>
    </alternativeName>
</protein>
<reference key="1">
    <citation type="journal article" date="1987" name="Gene">
        <title>Molecular cloning and sequencing of sucrose synthase cDNA from potato (Solanum tuberosum L.): preliminary characterization of sucrose synthase mRNA distribution.</title>
        <authorList>
            <person name="Salanoubat M."/>
            <person name="Belliard G."/>
        </authorList>
    </citation>
    <scope>NUCLEOTIDE SEQUENCE [MRNA]</scope>
    <source>
        <strain>cv. Sirtema</strain>
    </source>
</reference>
<reference key="2">
    <citation type="journal article" date="1995" name="Plant Cell">
        <title>Sink- and vascular-associated sucrose synthase functions are encoded by different gene classes in potato.</title>
        <authorList>
            <person name="Fu H."/>
            <person name="Park W.D."/>
        </authorList>
    </citation>
    <scope>NUCLEOTIDE SEQUENCE [GENOMIC DNA]</scope>
    <source>
        <strain>cv. FL1607</strain>
        <tissue>Leaf</tissue>
    </source>
</reference>
<dbReference type="EC" id="2.4.1.13"/>
<dbReference type="EMBL" id="M18745">
    <property type="protein sequence ID" value="AAA33841.1"/>
    <property type="molecule type" value="mRNA"/>
</dbReference>
<dbReference type="EMBL" id="U24087">
    <property type="protein sequence ID" value="AAA97571.1"/>
    <property type="molecule type" value="Genomic_DNA"/>
</dbReference>
<dbReference type="PIR" id="A29615">
    <property type="entry name" value="YUPOS"/>
</dbReference>
<dbReference type="SMR" id="P10691"/>
<dbReference type="FunCoup" id="P10691">
    <property type="interactions" value="132"/>
</dbReference>
<dbReference type="STRING" id="4113.P10691"/>
<dbReference type="CAZy" id="GT4">
    <property type="family name" value="Glycosyltransferase Family 4"/>
</dbReference>
<dbReference type="PaxDb" id="4113-PGSC0003DMT400007505"/>
<dbReference type="ProMEX" id="P10691"/>
<dbReference type="eggNOG" id="KOG0853">
    <property type="taxonomic scope" value="Eukaryota"/>
</dbReference>
<dbReference type="InParanoid" id="P10691"/>
<dbReference type="BRENDA" id="2.4.1.13">
    <property type="organism ID" value="5757"/>
</dbReference>
<dbReference type="SABIO-RK" id="P10691"/>
<dbReference type="Proteomes" id="UP000011115">
    <property type="component" value="Unassembled WGS sequence"/>
</dbReference>
<dbReference type="ExpressionAtlas" id="P10691">
    <property type="expression patterns" value="baseline and differential"/>
</dbReference>
<dbReference type="GO" id="GO:0016157">
    <property type="term" value="F:sucrose synthase activity"/>
    <property type="evidence" value="ECO:0000318"/>
    <property type="project" value="GO_Central"/>
</dbReference>
<dbReference type="GO" id="GO:0005985">
    <property type="term" value="P:sucrose metabolic process"/>
    <property type="evidence" value="ECO:0007669"/>
    <property type="project" value="InterPro"/>
</dbReference>
<dbReference type="FunFam" id="1.20.120.1230:FF:000001">
    <property type="entry name" value="Sucrose synthase"/>
    <property type="match status" value="1"/>
</dbReference>
<dbReference type="FunFam" id="3.10.450.330:FF:000001">
    <property type="entry name" value="Sucrose synthase"/>
    <property type="match status" value="1"/>
</dbReference>
<dbReference type="FunFam" id="3.40.50.2000:FF:000004">
    <property type="entry name" value="Sucrose synthase"/>
    <property type="match status" value="1"/>
</dbReference>
<dbReference type="Gene3D" id="1.20.120.1230">
    <property type="match status" value="1"/>
</dbReference>
<dbReference type="Gene3D" id="3.10.450.330">
    <property type="match status" value="1"/>
</dbReference>
<dbReference type="Gene3D" id="3.40.50.2000">
    <property type="entry name" value="Glycogen Phosphorylase B"/>
    <property type="match status" value="2"/>
</dbReference>
<dbReference type="InterPro" id="IPR001296">
    <property type="entry name" value="Glyco_trans_1"/>
</dbReference>
<dbReference type="InterPro" id="IPR000368">
    <property type="entry name" value="Sucrose_synth_GT-B1"/>
</dbReference>
<dbReference type="InterPro" id="IPR012820">
    <property type="entry name" value="Sucrose_synthase_pln/cyn"/>
</dbReference>
<dbReference type="InterPro" id="IPR056736">
    <property type="entry name" value="SUS_EPBD"/>
</dbReference>
<dbReference type="InterPro" id="IPR056735">
    <property type="entry name" value="SUS_N"/>
</dbReference>
<dbReference type="NCBIfam" id="TIGR02470">
    <property type="entry name" value="sucr_synth"/>
    <property type="match status" value="1"/>
</dbReference>
<dbReference type="PANTHER" id="PTHR45839">
    <property type="match status" value="1"/>
</dbReference>
<dbReference type="PANTHER" id="PTHR45839:SF21">
    <property type="entry name" value="SUCROSE SYNTHASE"/>
    <property type="match status" value="1"/>
</dbReference>
<dbReference type="Pfam" id="PF00534">
    <property type="entry name" value="Glycos_transf_1"/>
    <property type="match status" value="1"/>
</dbReference>
<dbReference type="Pfam" id="PF00862">
    <property type="entry name" value="GT-B_Sucrose_synth"/>
    <property type="match status" value="1"/>
</dbReference>
<dbReference type="Pfam" id="PF24862">
    <property type="entry name" value="SUS_EPBD"/>
    <property type="match status" value="1"/>
</dbReference>
<dbReference type="Pfam" id="PF24861">
    <property type="entry name" value="SUS_N"/>
    <property type="match status" value="1"/>
</dbReference>
<dbReference type="SUPFAM" id="SSF53756">
    <property type="entry name" value="UDP-Glycosyltransferase/glycogen phosphorylase"/>
    <property type="match status" value="1"/>
</dbReference>
<proteinExistence type="evidence at transcript level"/>
<evidence type="ECO:0000250" key="1">
    <source>
        <dbReference type="UniProtKB" id="P49040"/>
    </source>
</evidence>
<evidence type="ECO:0000305" key="2"/>